<reference key="1">
    <citation type="journal article" date="1994" name="J. Bacteriol.">
        <title>Phylogenetic analysis of sequences from diverse bacteria with homology to the Escherichia coli rho gene.</title>
        <authorList>
            <person name="Opperman T."/>
            <person name="Richardson J.P."/>
        </authorList>
    </citation>
    <scope>NUCLEOTIDE SEQUENCE [GENOMIC DNA] OF 16-427</scope>
</reference>
<reference key="2">
    <citation type="journal article" date="1999" name="Nature">
        <title>Evidence for lateral gene transfer between Archaea and Bacteria from genome sequence of Thermotoga maritima.</title>
        <authorList>
            <person name="Nelson K.E."/>
            <person name="Clayton R.A."/>
            <person name="Gill S.R."/>
            <person name="Gwinn M.L."/>
            <person name="Dodson R.J."/>
            <person name="Haft D.H."/>
            <person name="Hickey E.K."/>
            <person name="Peterson J.D."/>
            <person name="Nelson W.C."/>
            <person name="Ketchum K.A."/>
            <person name="McDonald L.A."/>
            <person name="Utterback T.R."/>
            <person name="Malek J.A."/>
            <person name="Linher K.D."/>
            <person name="Garrett M.M."/>
            <person name="Stewart A.M."/>
            <person name="Cotton M.D."/>
            <person name="Pratt M.S."/>
            <person name="Phillips C.A."/>
            <person name="Richardson D.L."/>
            <person name="Heidelberg J.F."/>
            <person name="Sutton G.G."/>
            <person name="Fleischmann R.D."/>
            <person name="Eisen J.A."/>
            <person name="White O."/>
            <person name="Salzberg S.L."/>
            <person name="Smith H.O."/>
            <person name="Venter J.C."/>
            <person name="Fraser C.M."/>
        </authorList>
    </citation>
    <scope>NUCLEOTIDE SEQUENCE [LARGE SCALE GENOMIC DNA]</scope>
    <source>
        <strain>ATCC 43589 / DSM 3109 / JCM 10099 / NBRC 100826 / MSB8</strain>
    </source>
</reference>
<reference key="3">
    <citation type="journal article" date="2010" name="J. Mol. Biol.">
        <title>The structure of RNA-free Rho termination factor indicates a dynamic mechanism of transcript capture.</title>
        <authorList>
            <person name="Canals A."/>
            <person name="Uson I."/>
            <person name="Coll M."/>
        </authorList>
    </citation>
    <scope>X-RAY CRYSTALLOGRAPHY (2.35 ANGSTROMS)</scope>
    <scope>SUBUNIT</scope>
</reference>
<dbReference type="EC" id="3.6.4.-" evidence="1"/>
<dbReference type="EMBL" id="L27279">
    <property type="protein sequence ID" value="AAA59210.1"/>
    <property type="molecule type" value="Genomic_DNA"/>
</dbReference>
<dbReference type="EMBL" id="AE000512">
    <property type="protein sequence ID" value="AAD36538.1"/>
    <property type="molecule type" value="Genomic_DNA"/>
</dbReference>
<dbReference type="PIR" id="G72246">
    <property type="entry name" value="G72246"/>
</dbReference>
<dbReference type="RefSeq" id="NP_229270.1">
    <property type="nucleotide sequence ID" value="NC_000853.1"/>
</dbReference>
<dbReference type="RefSeq" id="WP_004081775.1">
    <property type="nucleotide sequence ID" value="NC_000853.1"/>
</dbReference>
<dbReference type="PDB" id="3L0O">
    <property type="method" value="X-ray"/>
    <property type="resolution" value="2.35 A"/>
    <property type="chains" value="A/B=1-427"/>
</dbReference>
<dbReference type="PDBsum" id="3L0O"/>
<dbReference type="SMR" id="P38527"/>
<dbReference type="FunCoup" id="P38527">
    <property type="interactions" value="261"/>
</dbReference>
<dbReference type="STRING" id="243274.TM_1470"/>
<dbReference type="PaxDb" id="243274-THEMA_06950"/>
<dbReference type="EnsemblBacteria" id="AAD36538">
    <property type="protein sequence ID" value="AAD36538"/>
    <property type="gene ID" value="TM_1470"/>
</dbReference>
<dbReference type="KEGG" id="tma:TM1470"/>
<dbReference type="KEGG" id="tmi:THEMA_06950"/>
<dbReference type="KEGG" id="tmm:Tmari_1478"/>
<dbReference type="KEGG" id="tmw:THMA_1502"/>
<dbReference type="eggNOG" id="COG1158">
    <property type="taxonomic scope" value="Bacteria"/>
</dbReference>
<dbReference type="InParanoid" id="P38527"/>
<dbReference type="OrthoDB" id="9805197at2"/>
<dbReference type="EvolutionaryTrace" id="P38527"/>
<dbReference type="Proteomes" id="UP000008183">
    <property type="component" value="Chromosome"/>
</dbReference>
<dbReference type="GO" id="GO:0005524">
    <property type="term" value="F:ATP binding"/>
    <property type="evidence" value="ECO:0007669"/>
    <property type="project" value="UniProtKB-UniRule"/>
</dbReference>
<dbReference type="GO" id="GO:0016887">
    <property type="term" value="F:ATP hydrolysis activity"/>
    <property type="evidence" value="ECO:0007669"/>
    <property type="project" value="InterPro"/>
</dbReference>
<dbReference type="GO" id="GO:0008186">
    <property type="term" value="F:ATP-dependent activity, acting on RNA"/>
    <property type="evidence" value="ECO:0007669"/>
    <property type="project" value="InterPro"/>
</dbReference>
<dbReference type="GO" id="GO:0004386">
    <property type="term" value="F:helicase activity"/>
    <property type="evidence" value="ECO:0007669"/>
    <property type="project" value="UniProtKB-UniRule"/>
</dbReference>
<dbReference type="GO" id="GO:0003723">
    <property type="term" value="F:RNA binding"/>
    <property type="evidence" value="ECO:0007669"/>
    <property type="project" value="UniProtKB-UniRule"/>
</dbReference>
<dbReference type="GO" id="GO:0006353">
    <property type="term" value="P:DNA-templated transcription termination"/>
    <property type="evidence" value="ECO:0000318"/>
    <property type="project" value="GO_Central"/>
</dbReference>
<dbReference type="CDD" id="cd04459">
    <property type="entry name" value="Rho_CSD"/>
    <property type="match status" value="1"/>
</dbReference>
<dbReference type="CDD" id="cd01128">
    <property type="entry name" value="rho_factor_C"/>
    <property type="match status" value="1"/>
</dbReference>
<dbReference type="Gene3D" id="1.10.720.10">
    <property type="match status" value="1"/>
</dbReference>
<dbReference type="Gene3D" id="2.40.50.140">
    <property type="entry name" value="Nucleic acid-binding proteins"/>
    <property type="match status" value="1"/>
</dbReference>
<dbReference type="Gene3D" id="3.40.50.300">
    <property type="entry name" value="P-loop containing nucleotide triphosphate hydrolases"/>
    <property type="match status" value="1"/>
</dbReference>
<dbReference type="HAMAP" id="MF_01884">
    <property type="entry name" value="Rho"/>
    <property type="match status" value="1"/>
</dbReference>
<dbReference type="InterPro" id="IPR003593">
    <property type="entry name" value="AAA+_ATPase"/>
</dbReference>
<dbReference type="InterPro" id="IPR000194">
    <property type="entry name" value="ATPase_F1/V1/A1_a/bsu_nucl-bd"/>
</dbReference>
<dbReference type="InterPro" id="IPR011129">
    <property type="entry name" value="CSD"/>
</dbReference>
<dbReference type="InterPro" id="IPR012340">
    <property type="entry name" value="NA-bd_OB-fold"/>
</dbReference>
<dbReference type="InterPro" id="IPR027417">
    <property type="entry name" value="P-loop_NTPase"/>
</dbReference>
<dbReference type="InterPro" id="IPR011112">
    <property type="entry name" value="Rho-like_N"/>
</dbReference>
<dbReference type="InterPro" id="IPR041703">
    <property type="entry name" value="Rho_factor_ATP-bd"/>
</dbReference>
<dbReference type="InterPro" id="IPR036269">
    <property type="entry name" value="Rho_N_sf"/>
</dbReference>
<dbReference type="InterPro" id="IPR011113">
    <property type="entry name" value="Rho_RNA-bd"/>
</dbReference>
<dbReference type="InterPro" id="IPR004665">
    <property type="entry name" value="Term_rho"/>
</dbReference>
<dbReference type="NCBIfam" id="NF006886">
    <property type="entry name" value="PRK09376.1"/>
    <property type="match status" value="1"/>
</dbReference>
<dbReference type="NCBIfam" id="TIGR00767">
    <property type="entry name" value="rho"/>
    <property type="match status" value="1"/>
</dbReference>
<dbReference type="PANTHER" id="PTHR46425">
    <property type="entry name" value="TRANSCRIPTION TERMINATION FACTOR RHO"/>
    <property type="match status" value="1"/>
</dbReference>
<dbReference type="PANTHER" id="PTHR46425:SF1">
    <property type="entry name" value="TRANSCRIPTION TERMINATION FACTOR RHO"/>
    <property type="match status" value="1"/>
</dbReference>
<dbReference type="Pfam" id="PF00006">
    <property type="entry name" value="ATP-synt_ab"/>
    <property type="match status" value="1"/>
</dbReference>
<dbReference type="Pfam" id="PF07498">
    <property type="entry name" value="Rho_N"/>
    <property type="match status" value="1"/>
</dbReference>
<dbReference type="Pfam" id="PF07497">
    <property type="entry name" value="Rho_RNA_bind"/>
    <property type="match status" value="1"/>
</dbReference>
<dbReference type="SMART" id="SM00382">
    <property type="entry name" value="AAA"/>
    <property type="match status" value="1"/>
</dbReference>
<dbReference type="SMART" id="SM00357">
    <property type="entry name" value="CSP"/>
    <property type="match status" value="1"/>
</dbReference>
<dbReference type="SMART" id="SM00959">
    <property type="entry name" value="Rho_N"/>
    <property type="match status" value="1"/>
</dbReference>
<dbReference type="SUPFAM" id="SSF50249">
    <property type="entry name" value="Nucleic acid-binding proteins"/>
    <property type="match status" value="1"/>
</dbReference>
<dbReference type="SUPFAM" id="SSF52540">
    <property type="entry name" value="P-loop containing nucleoside triphosphate hydrolases"/>
    <property type="match status" value="1"/>
</dbReference>
<dbReference type="SUPFAM" id="SSF68912">
    <property type="entry name" value="Rho N-terminal domain-like"/>
    <property type="match status" value="1"/>
</dbReference>
<dbReference type="PROSITE" id="PS51856">
    <property type="entry name" value="RHO_RNA_BD"/>
    <property type="match status" value="1"/>
</dbReference>
<organism>
    <name type="scientific">Thermotoga maritima (strain ATCC 43589 / DSM 3109 / JCM 10099 / NBRC 100826 / MSB8)</name>
    <dbReference type="NCBI Taxonomy" id="243274"/>
    <lineage>
        <taxon>Bacteria</taxon>
        <taxon>Thermotogati</taxon>
        <taxon>Thermotogota</taxon>
        <taxon>Thermotogae</taxon>
        <taxon>Thermotogales</taxon>
        <taxon>Thermotogaceae</taxon>
        <taxon>Thermotoga</taxon>
    </lineage>
</organism>
<accession>P38527</accession>
<proteinExistence type="evidence at protein level"/>
<evidence type="ECO:0000255" key="1">
    <source>
        <dbReference type="HAMAP-Rule" id="MF_01884"/>
    </source>
</evidence>
<evidence type="ECO:0000255" key="2">
    <source>
        <dbReference type="PROSITE-ProRule" id="PRU01203"/>
    </source>
</evidence>
<evidence type="ECO:0000269" key="3">
    <source>
    </source>
</evidence>
<evidence type="ECO:0007829" key="4">
    <source>
        <dbReference type="PDB" id="3L0O"/>
    </source>
</evidence>
<keyword id="KW-0002">3D-structure</keyword>
<keyword id="KW-0067">ATP-binding</keyword>
<keyword id="KW-0347">Helicase</keyword>
<keyword id="KW-0378">Hydrolase</keyword>
<keyword id="KW-0547">Nucleotide-binding</keyword>
<keyword id="KW-1185">Reference proteome</keyword>
<keyword id="KW-0694">RNA-binding</keyword>
<keyword id="KW-0804">Transcription</keyword>
<keyword id="KW-0805">Transcription regulation</keyword>
<keyword id="KW-0806">Transcription termination</keyword>
<name>RHO_THEMA</name>
<protein>
    <recommendedName>
        <fullName evidence="1">Transcription termination factor Rho</fullName>
        <ecNumber evidence="1">3.6.4.-</ecNumber>
    </recommendedName>
    <alternativeName>
        <fullName evidence="1">ATP-dependent helicase Rho</fullName>
    </alternativeName>
</protein>
<gene>
    <name evidence="1" type="primary">rho</name>
    <name type="ordered locus">TM_1470</name>
</gene>
<comment type="function">
    <text evidence="1">Facilitates transcription termination by a mechanism that involves Rho binding to the nascent RNA, activation of Rho's RNA-dependent ATPase activity, and release of the mRNA from the DNA template.</text>
</comment>
<comment type="subunit">
    <text evidence="1 3">Homohexamer. The homohexamer assembles into an open ring structure.</text>
</comment>
<comment type="similarity">
    <text evidence="1">Belongs to the Rho family.</text>
</comment>
<sequence>MSEEQKTISISELESMNIKQLYEIAKSLGIPRYTSMRKRDLIFAILKAQTESTGYFFGEGVLEIHPEGFGFLRRIEDNLLPSNDDIYISPSQIRKFNLNTGDIISGVIRKPKEGEKYFAMIKIEAINYRPVEAVNDRVNFDNLTPDYPRERFILETDPKIYSTRLIDLFAPIGKGQRGMIVAPPKAGKTTILKEIANGIAENHPDTIRIILLIDERPEEVTDIRESTNAIVIAAPFDMPPDKQVKVAELTLEMAKRLVEFNYDVVILLDSLTRLARVYNIVVPPSGKLLTGGVDPAALYKPKRFFGAARNTREGGSLTIIATALVETGSKMDEVIFEEFKGTGNMELVLSRQLANKRIFPAINLLLSGTRREELLLDEETLKKVWLLRRMLSAMTEEEGLTLILNKLSETSSNEEFLKLIDKEKARY</sequence>
<feature type="chain" id="PRO_0000188980" description="Transcription termination factor Rho">
    <location>
        <begin position="1"/>
        <end position="427"/>
    </location>
</feature>
<feature type="domain" description="Rho RNA-BD" evidence="2">
    <location>
        <begin position="55"/>
        <end position="130"/>
    </location>
</feature>
<feature type="binding site" evidence="1">
    <location>
        <begin position="173"/>
        <end position="178"/>
    </location>
    <ligand>
        <name>ATP</name>
        <dbReference type="ChEBI" id="CHEBI:30616"/>
    </ligand>
</feature>
<feature type="binding site" evidence="1">
    <location>
        <begin position="185"/>
        <end position="190"/>
    </location>
    <ligand>
        <name>ATP</name>
        <dbReference type="ChEBI" id="CHEBI:30616"/>
    </ligand>
</feature>
<feature type="binding site" evidence="1">
    <location>
        <position position="216"/>
    </location>
    <ligand>
        <name>ATP</name>
        <dbReference type="ChEBI" id="CHEBI:30616"/>
    </ligand>
</feature>
<feature type="helix" evidence="4">
    <location>
        <begin position="10"/>
        <end position="15"/>
    </location>
</feature>
<feature type="helix" evidence="4">
    <location>
        <begin position="18"/>
        <end position="27"/>
    </location>
</feature>
<feature type="helix" evidence="4">
    <location>
        <begin position="33"/>
        <end position="35"/>
    </location>
</feature>
<feature type="helix" evidence="4">
    <location>
        <begin position="38"/>
        <end position="47"/>
    </location>
</feature>
<feature type="helix" evidence="4">
    <location>
        <begin position="48"/>
        <end position="50"/>
    </location>
</feature>
<feature type="strand" evidence="4">
    <location>
        <begin position="51"/>
        <end position="64"/>
    </location>
</feature>
<feature type="strand" evidence="4">
    <location>
        <begin position="70"/>
        <end position="73"/>
    </location>
</feature>
<feature type="helix" evidence="4">
    <location>
        <begin position="75"/>
        <end position="77"/>
    </location>
</feature>
<feature type="strand" evidence="4">
    <location>
        <begin position="86"/>
        <end position="88"/>
    </location>
</feature>
<feature type="helix" evidence="4">
    <location>
        <begin position="90"/>
        <end position="95"/>
    </location>
</feature>
<feature type="strand" evidence="4">
    <location>
        <begin position="103"/>
        <end position="109"/>
    </location>
</feature>
<feature type="strand" evidence="4">
    <location>
        <begin position="113"/>
        <end position="115"/>
    </location>
</feature>
<feature type="strand" evidence="4">
    <location>
        <begin position="117"/>
        <end position="126"/>
    </location>
</feature>
<feature type="helix" evidence="4">
    <location>
        <begin position="140"/>
        <end position="142"/>
    </location>
</feature>
<feature type="helix" evidence="4">
    <location>
        <begin position="161"/>
        <end position="169"/>
    </location>
</feature>
<feature type="strand" evidence="4">
    <location>
        <begin position="177"/>
        <end position="182"/>
    </location>
</feature>
<feature type="helix" evidence="4">
    <location>
        <begin position="188"/>
        <end position="202"/>
    </location>
</feature>
<feature type="strand" evidence="4">
    <location>
        <begin position="206"/>
        <end position="212"/>
    </location>
</feature>
<feature type="helix" evidence="4">
    <location>
        <begin position="217"/>
        <end position="220"/>
    </location>
</feature>
<feature type="strand" evidence="4">
    <location>
        <begin position="221"/>
        <end position="226"/>
    </location>
</feature>
<feature type="strand" evidence="4">
    <location>
        <begin position="229"/>
        <end position="233"/>
    </location>
</feature>
<feature type="helix" evidence="4">
    <location>
        <begin position="240"/>
        <end position="259"/>
    </location>
</feature>
<feature type="strand" evidence="4">
    <location>
        <begin position="263"/>
        <end position="269"/>
    </location>
</feature>
<feature type="helix" evidence="4">
    <location>
        <begin position="271"/>
        <end position="281"/>
    </location>
</feature>
<feature type="strand" evidence="4">
    <location>
        <begin position="290"/>
        <end position="292"/>
    </location>
</feature>
<feature type="helix" evidence="4">
    <location>
        <begin position="299"/>
        <end position="306"/>
    </location>
</feature>
<feature type="strand" evidence="4">
    <location>
        <begin position="309"/>
        <end position="314"/>
    </location>
</feature>
<feature type="strand" evidence="4">
    <location>
        <begin position="316"/>
        <end position="324"/>
    </location>
</feature>
<feature type="strand" evidence="4">
    <location>
        <begin position="326"/>
        <end position="328"/>
    </location>
</feature>
<feature type="helix" evidence="4">
    <location>
        <begin position="331"/>
        <end position="338"/>
    </location>
</feature>
<feature type="turn" evidence="4">
    <location>
        <begin position="339"/>
        <end position="341"/>
    </location>
</feature>
<feature type="strand" evidence="4">
    <location>
        <begin position="344"/>
        <end position="349"/>
    </location>
</feature>
<feature type="helix" evidence="4">
    <location>
        <begin position="351"/>
        <end position="354"/>
    </location>
</feature>
<feature type="turn" evidence="4">
    <location>
        <begin position="355"/>
        <end position="357"/>
    </location>
</feature>
<feature type="helix" evidence="4">
    <location>
        <begin position="372"/>
        <end position="374"/>
    </location>
</feature>
<feature type="helix" evidence="4">
    <location>
        <begin position="378"/>
        <end position="391"/>
    </location>
</feature>
<feature type="helix" evidence="4">
    <location>
        <begin position="396"/>
        <end position="408"/>
    </location>
</feature>
<feature type="helix" evidence="4">
    <location>
        <begin position="413"/>
        <end position="419"/>
    </location>
</feature>